<sequence length="669" mass="74376">MLRTRLSVSVAARSQLTRSLTASRTAPLRRWPIQQSRLYSSNTRSHKATTTRENTFQKPYSDEEVTKTPVGSRARKIFEAPHPHATRLTVEGAIECPLESFQLLNSPLFNKGSAFTQEEREAFNLEALLPPQVNTLDEQLERSYKQLCYLKTPLAKNDFMTSLRVQNKVLYFALIRRHIKELVPIIYTPTEGDAIAAYSHRFRKPEGVFLDITEPDSIECRLATYGGDKDVDYIVVSDSEGILGIGDQGIGGVRIAISKLALMTLCGGIHPGRVLPVCLDVGTNNKKLARDELYMGNKFSRIRGKQYDDFLEKFIKAVKKVYPSAVLHFEDFGVKNARRLLEKYRYELPSFNDDIQGTGAVVMASLIAALKHTNRDLKDTRVLIYGAGSAGLGIADQIVNHMVTHGVDKEEARKKIFLMDRRGLILQSYEANSTPAQHVYAKSDAEWAGINTRSLHDVVENVKPTCLVGCSTQAGAFTQDVVEEMHKHNPRPIIFPLSNPTRLHEAVPADLMKWTNNNALVATGSPFPPVDGYRISENNNCYSFPGIGLGAVLSRATTITDKMISAAVDQLAELSPLREGDSRPGLLPGLDTITNTSARLATAVILQALEEGTARIEQEQVPGGAPGETVKVPRDFDECLQWVKAQMWEPVYRPMIKVQHDPSVHTNQL</sequence>
<organism>
    <name type="scientific">Saccharomyces cerevisiae (strain ATCC 204508 / S288c)</name>
    <name type="common">Baker's yeast</name>
    <dbReference type="NCBI Taxonomy" id="559292"/>
    <lineage>
        <taxon>Eukaryota</taxon>
        <taxon>Fungi</taxon>
        <taxon>Dikarya</taxon>
        <taxon>Ascomycota</taxon>
        <taxon>Saccharomycotina</taxon>
        <taxon>Saccharomycetes</taxon>
        <taxon>Saccharomycetales</taxon>
        <taxon>Saccharomycetaceae</taxon>
        <taxon>Saccharomyces</taxon>
    </lineage>
</organism>
<comment type="function">
    <text evidence="1">NAD-dependent mitochondrial malic enzyme that catalyzes the oxidative decarboxylation of malate to pyruvate.</text>
</comment>
<comment type="catalytic activity">
    <reaction evidence="1">
        <text>(S)-malate + NAD(+) = pyruvate + CO2 + NADH</text>
        <dbReference type="Rhea" id="RHEA:12653"/>
        <dbReference type="ChEBI" id="CHEBI:15361"/>
        <dbReference type="ChEBI" id="CHEBI:15589"/>
        <dbReference type="ChEBI" id="CHEBI:16526"/>
        <dbReference type="ChEBI" id="CHEBI:57540"/>
        <dbReference type="ChEBI" id="CHEBI:57945"/>
        <dbReference type="EC" id="1.1.1.38"/>
    </reaction>
</comment>
<comment type="catalytic activity">
    <reaction evidence="1">
        <text>oxaloacetate + H(+) = pyruvate + CO2</text>
        <dbReference type="Rhea" id="RHEA:15641"/>
        <dbReference type="ChEBI" id="CHEBI:15361"/>
        <dbReference type="ChEBI" id="CHEBI:15378"/>
        <dbReference type="ChEBI" id="CHEBI:16452"/>
        <dbReference type="ChEBI" id="CHEBI:16526"/>
        <dbReference type="EC" id="1.1.1.38"/>
    </reaction>
</comment>
<comment type="cofactor">
    <cofactor evidence="1">
        <name>Mg(2+)</name>
        <dbReference type="ChEBI" id="CHEBI:18420"/>
    </cofactor>
    <cofactor evidence="1">
        <name>Mn(2+)</name>
        <dbReference type="ChEBI" id="CHEBI:29035"/>
    </cofactor>
    <text evidence="1">Divalent metal cations. Prefers magnesium or manganese.</text>
</comment>
<comment type="subcellular location">
    <subcellularLocation>
        <location evidence="4 5">Mitochondrion matrix</location>
    </subcellularLocation>
</comment>
<comment type="miscellaneous">
    <text evidence="3">Present with 10500 molecules/cell in log phase SD medium.</text>
</comment>
<comment type="similarity">
    <text evidence="6">Belongs to the malic enzymes family.</text>
</comment>
<dbReference type="EC" id="1.1.1.38" evidence="1"/>
<dbReference type="EMBL" id="Z28029">
    <property type="protein sequence ID" value="CAA81865.1"/>
    <property type="molecule type" value="Genomic_DNA"/>
</dbReference>
<dbReference type="EMBL" id="BK006944">
    <property type="protein sequence ID" value="DAA09125.1"/>
    <property type="molecule type" value="Genomic_DNA"/>
</dbReference>
<dbReference type="PIR" id="S37846">
    <property type="entry name" value="S37846"/>
</dbReference>
<dbReference type="RefSeq" id="NP_012896.1">
    <property type="nucleotide sequence ID" value="NM_001179595.1"/>
</dbReference>
<dbReference type="SMR" id="P36013"/>
<dbReference type="BioGRID" id="34102">
    <property type="interactions" value="188"/>
</dbReference>
<dbReference type="DIP" id="DIP-4444N"/>
<dbReference type="FunCoup" id="P36013">
    <property type="interactions" value="1136"/>
</dbReference>
<dbReference type="IntAct" id="P36013">
    <property type="interactions" value="78"/>
</dbReference>
<dbReference type="MINT" id="P36013"/>
<dbReference type="STRING" id="4932.YKL029C"/>
<dbReference type="CarbonylDB" id="P36013"/>
<dbReference type="iPTMnet" id="P36013"/>
<dbReference type="PaxDb" id="4932-YKL029C"/>
<dbReference type="PeptideAtlas" id="P36013"/>
<dbReference type="EnsemblFungi" id="YKL029C_mRNA">
    <property type="protein sequence ID" value="YKL029C"/>
    <property type="gene ID" value="YKL029C"/>
</dbReference>
<dbReference type="GeneID" id="853839"/>
<dbReference type="KEGG" id="sce:YKL029C"/>
<dbReference type="AGR" id="SGD:S000001512"/>
<dbReference type="SGD" id="S000001512">
    <property type="gene designation" value="MAE1"/>
</dbReference>
<dbReference type="VEuPathDB" id="FungiDB:YKL029C"/>
<dbReference type="eggNOG" id="KOG1257">
    <property type="taxonomic scope" value="Eukaryota"/>
</dbReference>
<dbReference type="GeneTree" id="ENSGT00950000183134"/>
<dbReference type="HOGENOM" id="CLU_011405_5_2_1"/>
<dbReference type="InParanoid" id="P36013"/>
<dbReference type="OMA" id="QIVNHMV"/>
<dbReference type="OrthoDB" id="5365701at2759"/>
<dbReference type="BioCyc" id="MetaCyc:YKL029C-MONOMER"/>
<dbReference type="BioCyc" id="YEAST:YKL029C-MONOMER"/>
<dbReference type="BioGRID-ORCS" id="853839">
    <property type="hits" value="4 hits in 10 CRISPR screens"/>
</dbReference>
<dbReference type="CD-CODE" id="E03F929F">
    <property type="entry name" value="Stress granule"/>
</dbReference>
<dbReference type="PRO" id="PR:P36013"/>
<dbReference type="Proteomes" id="UP000002311">
    <property type="component" value="Chromosome XI"/>
</dbReference>
<dbReference type="RNAct" id="P36013">
    <property type="molecule type" value="protein"/>
</dbReference>
<dbReference type="GO" id="GO:0005759">
    <property type="term" value="C:mitochondrial matrix"/>
    <property type="evidence" value="ECO:0007669"/>
    <property type="project" value="UniProtKB-SubCell"/>
</dbReference>
<dbReference type="GO" id="GO:0005739">
    <property type="term" value="C:mitochondrion"/>
    <property type="evidence" value="ECO:0000314"/>
    <property type="project" value="SGD"/>
</dbReference>
<dbReference type="GO" id="GO:0004471">
    <property type="term" value="F:malate dehydrogenase (decarboxylating) (NAD+) activity"/>
    <property type="evidence" value="ECO:0000318"/>
    <property type="project" value="GO_Central"/>
</dbReference>
<dbReference type="GO" id="GO:0004470">
    <property type="term" value="F:malic enzyme activity"/>
    <property type="evidence" value="ECO:0000314"/>
    <property type="project" value="SGD"/>
</dbReference>
<dbReference type="GO" id="GO:0046872">
    <property type="term" value="F:metal ion binding"/>
    <property type="evidence" value="ECO:0007669"/>
    <property type="project" value="UniProtKB-KW"/>
</dbReference>
<dbReference type="GO" id="GO:0051287">
    <property type="term" value="F:NAD binding"/>
    <property type="evidence" value="ECO:0007669"/>
    <property type="project" value="InterPro"/>
</dbReference>
<dbReference type="GO" id="GO:0008948">
    <property type="term" value="F:oxaloacetate decarboxylase activity"/>
    <property type="evidence" value="ECO:0007669"/>
    <property type="project" value="RHEA"/>
</dbReference>
<dbReference type="GO" id="GO:0006520">
    <property type="term" value="P:amino acid metabolic process"/>
    <property type="evidence" value="ECO:0000315"/>
    <property type="project" value="SGD"/>
</dbReference>
<dbReference type="GO" id="GO:0006108">
    <property type="term" value="P:malate metabolic process"/>
    <property type="evidence" value="ECO:0000318"/>
    <property type="project" value="GO_Central"/>
</dbReference>
<dbReference type="GO" id="GO:0006090">
    <property type="term" value="P:pyruvate metabolic process"/>
    <property type="evidence" value="ECO:0000315"/>
    <property type="project" value="SGD"/>
</dbReference>
<dbReference type="CDD" id="cd05312">
    <property type="entry name" value="NAD_bind_1_malic_enz"/>
    <property type="match status" value="1"/>
</dbReference>
<dbReference type="FunFam" id="3.40.50.10380:FF:000001">
    <property type="entry name" value="NAD-dependent malic enzyme"/>
    <property type="match status" value="1"/>
</dbReference>
<dbReference type="FunFam" id="3.40.50.720:FF:000055">
    <property type="entry name" value="NAD-dependent malic enzyme"/>
    <property type="match status" value="1"/>
</dbReference>
<dbReference type="Gene3D" id="3.40.50.10380">
    <property type="entry name" value="Malic enzyme, N-terminal domain"/>
    <property type="match status" value="1"/>
</dbReference>
<dbReference type="Gene3D" id="3.40.50.720">
    <property type="entry name" value="NAD(P)-binding Rossmann-like Domain"/>
    <property type="match status" value="1"/>
</dbReference>
<dbReference type="InterPro" id="IPR046346">
    <property type="entry name" value="Aminoacid_DH-like_N_sf"/>
</dbReference>
<dbReference type="InterPro" id="IPR015884">
    <property type="entry name" value="Malic_enzyme_CS"/>
</dbReference>
<dbReference type="InterPro" id="IPR012301">
    <property type="entry name" value="Malic_N_dom"/>
</dbReference>
<dbReference type="InterPro" id="IPR037062">
    <property type="entry name" value="Malic_N_dom_sf"/>
</dbReference>
<dbReference type="InterPro" id="IPR012302">
    <property type="entry name" value="Malic_NAD-bd"/>
</dbReference>
<dbReference type="InterPro" id="IPR001891">
    <property type="entry name" value="Malic_OxRdtase"/>
</dbReference>
<dbReference type="InterPro" id="IPR036291">
    <property type="entry name" value="NAD(P)-bd_dom_sf"/>
</dbReference>
<dbReference type="NCBIfam" id="NF010052">
    <property type="entry name" value="PRK13529.1"/>
    <property type="match status" value="1"/>
</dbReference>
<dbReference type="PANTHER" id="PTHR23406">
    <property type="entry name" value="MALIC ENZYME-RELATED"/>
    <property type="match status" value="1"/>
</dbReference>
<dbReference type="PANTHER" id="PTHR23406:SF34">
    <property type="entry name" value="NAD-DEPENDENT MALIC ENZYME, MITOCHONDRIAL"/>
    <property type="match status" value="1"/>
</dbReference>
<dbReference type="Pfam" id="PF00390">
    <property type="entry name" value="malic"/>
    <property type="match status" value="1"/>
</dbReference>
<dbReference type="Pfam" id="PF03949">
    <property type="entry name" value="Malic_M"/>
    <property type="match status" value="1"/>
</dbReference>
<dbReference type="PIRSF" id="PIRSF000106">
    <property type="entry name" value="ME"/>
    <property type="match status" value="1"/>
</dbReference>
<dbReference type="PRINTS" id="PR00072">
    <property type="entry name" value="MALOXRDTASE"/>
</dbReference>
<dbReference type="SMART" id="SM01274">
    <property type="entry name" value="malic"/>
    <property type="match status" value="1"/>
</dbReference>
<dbReference type="SMART" id="SM00919">
    <property type="entry name" value="Malic_M"/>
    <property type="match status" value="1"/>
</dbReference>
<dbReference type="SUPFAM" id="SSF53223">
    <property type="entry name" value="Aminoacid dehydrogenase-like, N-terminal domain"/>
    <property type="match status" value="1"/>
</dbReference>
<dbReference type="SUPFAM" id="SSF51735">
    <property type="entry name" value="NAD(P)-binding Rossmann-fold domains"/>
    <property type="match status" value="1"/>
</dbReference>
<dbReference type="PROSITE" id="PS00331">
    <property type="entry name" value="MALIC_ENZYMES"/>
    <property type="match status" value="1"/>
</dbReference>
<accession>P36013</accession>
<accession>D6VXQ5</accession>
<protein>
    <recommendedName>
        <fullName>NAD-dependent malic enzyme, mitochondrial</fullName>
        <shortName>NAD-ME</shortName>
        <ecNumber evidence="1">1.1.1.38</ecNumber>
    </recommendedName>
</protein>
<proteinExistence type="evidence at protein level"/>
<name>MAOM_YEAST</name>
<keyword id="KW-0479">Metal-binding</keyword>
<keyword id="KW-0496">Mitochondrion</keyword>
<keyword id="KW-0520">NAD</keyword>
<keyword id="KW-0560">Oxidoreductase</keyword>
<keyword id="KW-1185">Reference proteome</keyword>
<keyword id="KW-0809">Transit peptide</keyword>
<evidence type="ECO:0000250" key="1">
    <source>
        <dbReference type="UniProtKB" id="P23368"/>
    </source>
</evidence>
<evidence type="ECO:0000256" key="2">
    <source>
        <dbReference type="SAM" id="MobiDB-lite"/>
    </source>
</evidence>
<evidence type="ECO:0000269" key="3">
    <source>
    </source>
</evidence>
<evidence type="ECO:0000269" key="4">
    <source>
    </source>
</evidence>
<evidence type="ECO:0000269" key="5">
    <source>
    </source>
</evidence>
<evidence type="ECO:0000305" key="6"/>
<feature type="transit peptide" description="Mitochondrion">
    <location>
        <begin position="1"/>
        <end status="unknown"/>
    </location>
</feature>
<feature type="chain" id="PRO_0000160206" description="NAD-dependent malic enzyme, mitochondrial">
    <location>
        <begin status="unknown"/>
        <end position="669"/>
    </location>
</feature>
<feature type="region of interest" description="Disordered" evidence="2">
    <location>
        <begin position="33"/>
        <end position="68"/>
    </location>
</feature>
<feature type="compositionally biased region" description="Polar residues" evidence="2">
    <location>
        <begin position="33"/>
        <end position="43"/>
    </location>
</feature>
<feature type="active site" description="Proton donor" evidence="1">
    <location>
        <position position="187"/>
    </location>
</feature>
<feature type="active site" description="Proton acceptor" evidence="1">
    <location>
        <position position="259"/>
    </location>
</feature>
<feature type="binding site" evidence="1">
    <location>
        <position position="142"/>
    </location>
    <ligand>
        <name>fumarate</name>
        <dbReference type="ChEBI" id="CHEBI:29806"/>
        <note>allosteric activator</note>
    </ligand>
</feature>
<feature type="binding site" evidence="1">
    <location>
        <position position="330"/>
    </location>
    <ligand>
        <name>a divalent metal cation</name>
        <dbReference type="ChEBI" id="CHEBI:60240"/>
    </ligand>
</feature>
<feature type="binding site" evidence="1">
    <location>
        <position position="331"/>
    </location>
    <ligand>
        <name>a divalent metal cation</name>
        <dbReference type="ChEBI" id="CHEBI:60240"/>
    </ligand>
</feature>
<feature type="binding site" evidence="1">
    <location>
        <position position="354"/>
    </location>
    <ligand>
        <name>a divalent metal cation</name>
        <dbReference type="ChEBI" id="CHEBI:60240"/>
    </ligand>
</feature>
<feature type="binding site" evidence="1">
    <location>
        <position position="387"/>
    </location>
    <ligand>
        <name>NAD(+)</name>
        <dbReference type="ChEBI" id="CHEBI:57540"/>
    </ligand>
</feature>
<feature type="binding site" evidence="1">
    <location>
        <position position="390"/>
    </location>
    <ligand>
        <name>NAD(+)</name>
        <dbReference type="ChEBI" id="CHEBI:57540"/>
    </ligand>
</feature>
<feature type="binding site" evidence="1">
    <location>
        <position position="499"/>
    </location>
    <ligand>
        <name>(S)-malate</name>
        <dbReference type="ChEBI" id="CHEBI:15589"/>
    </ligand>
</feature>
<feature type="binding site" evidence="1">
    <location>
        <position position="539"/>
    </location>
    <ligand>
        <name>(S)-malate</name>
        <dbReference type="ChEBI" id="CHEBI:15589"/>
    </ligand>
</feature>
<reference key="1">
    <citation type="journal article" date="1994" name="Nature">
        <title>Complete DNA sequence of yeast chromosome XI.</title>
        <authorList>
            <person name="Dujon B."/>
            <person name="Alexandraki D."/>
            <person name="Andre B."/>
            <person name="Ansorge W."/>
            <person name="Baladron V."/>
            <person name="Ballesta J.P.G."/>
            <person name="Banrevi A."/>
            <person name="Bolle P.-A."/>
            <person name="Bolotin-Fukuhara M."/>
            <person name="Bossier P."/>
            <person name="Bou G."/>
            <person name="Boyer J."/>
            <person name="Buitrago M.J."/>
            <person name="Cheret G."/>
            <person name="Colleaux L."/>
            <person name="Daignan-Fornier B."/>
            <person name="del Rey F."/>
            <person name="Dion C."/>
            <person name="Domdey H."/>
            <person name="Duesterhoeft A."/>
            <person name="Duesterhus S."/>
            <person name="Entian K.-D."/>
            <person name="Erfle H."/>
            <person name="Esteban P.F."/>
            <person name="Feldmann H."/>
            <person name="Fernandes L."/>
            <person name="Fobo G.M."/>
            <person name="Fritz C."/>
            <person name="Fukuhara H."/>
            <person name="Gabel C."/>
            <person name="Gaillon L."/>
            <person name="Garcia-Cantalejo J.M."/>
            <person name="Garcia-Ramirez J.J."/>
            <person name="Gent M.E."/>
            <person name="Ghazvini M."/>
            <person name="Goffeau A."/>
            <person name="Gonzalez A."/>
            <person name="Grothues D."/>
            <person name="Guerreiro P."/>
            <person name="Hegemann J.H."/>
            <person name="Hewitt N."/>
            <person name="Hilger F."/>
            <person name="Hollenberg C.P."/>
            <person name="Horaitis O."/>
            <person name="Indge K.J."/>
            <person name="Jacquier A."/>
            <person name="James C.M."/>
            <person name="Jauniaux J.-C."/>
            <person name="Jimenez A."/>
            <person name="Keuchel H."/>
            <person name="Kirchrath L."/>
            <person name="Kleine K."/>
            <person name="Koetter P."/>
            <person name="Legrain P."/>
            <person name="Liebl S."/>
            <person name="Louis E.J."/>
            <person name="Maia e Silva A."/>
            <person name="Marck C."/>
            <person name="Monnier A.-L."/>
            <person name="Moestl D."/>
            <person name="Mueller S."/>
            <person name="Obermaier B."/>
            <person name="Oliver S.G."/>
            <person name="Pallier C."/>
            <person name="Pascolo S."/>
            <person name="Pfeiffer F."/>
            <person name="Philippsen P."/>
            <person name="Planta R.J."/>
            <person name="Pohl F.M."/>
            <person name="Pohl T.M."/>
            <person name="Poehlmann R."/>
            <person name="Portetelle D."/>
            <person name="Purnelle B."/>
            <person name="Puzos V."/>
            <person name="Ramezani Rad M."/>
            <person name="Rasmussen S.W."/>
            <person name="Remacha M.A."/>
            <person name="Revuelta J.L."/>
            <person name="Richard G.-F."/>
            <person name="Rieger M."/>
            <person name="Rodrigues-Pousada C."/>
            <person name="Rose M."/>
            <person name="Rupp T."/>
            <person name="Santos M.A."/>
            <person name="Schwager C."/>
            <person name="Sensen C."/>
            <person name="Skala J."/>
            <person name="Soares H."/>
            <person name="Sor F."/>
            <person name="Stegemann J."/>
            <person name="Tettelin H."/>
            <person name="Thierry A."/>
            <person name="Tzermia M."/>
            <person name="Urrestarazu L.A."/>
            <person name="van Dyck L."/>
            <person name="van Vliet-Reedijk J.C."/>
            <person name="Valens M."/>
            <person name="Vandenbol M."/>
            <person name="Vilela C."/>
            <person name="Vissers S."/>
            <person name="von Wettstein D."/>
            <person name="Voss H."/>
            <person name="Wiemann S."/>
            <person name="Xu G."/>
            <person name="Zimmermann J."/>
            <person name="Haasemann M."/>
            <person name="Becker I."/>
            <person name="Mewes H.-W."/>
        </authorList>
    </citation>
    <scope>NUCLEOTIDE SEQUENCE [LARGE SCALE GENOMIC DNA]</scope>
    <source>
        <strain>ATCC 204508 / S288c</strain>
    </source>
</reference>
<reference key="2">
    <citation type="journal article" date="2014" name="G3 (Bethesda)">
        <title>The reference genome sequence of Saccharomyces cerevisiae: Then and now.</title>
        <authorList>
            <person name="Engel S.R."/>
            <person name="Dietrich F.S."/>
            <person name="Fisk D.G."/>
            <person name="Binkley G."/>
            <person name="Balakrishnan R."/>
            <person name="Costanzo M.C."/>
            <person name="Dwight S.S."/>
            <person name="Hitz B.C."/>
            <person name="Karra K."/>
            <person name="Nash R.S."/>
            <person name="Weng S."/>
            <person name="Wong E.D."/>
            <person name="Lloyd P."/>
            <person name="Skrzypek M.S."/>
            <person name="Miyasato S.R."/>
            <person name="Simison M."/>
            <person name="Cherry J.M."/>
        </authorList>
    </citation>
    <scope>GENOME REANNOTATION</scope>
    <source>
        <strain>ATCC 204508 / S288c</strain>
    </source>
</reference>
<reference key="3">
    <citation type="journal article" date="1998" name="J. Bacteriol.">
        <title>Identification and characterization of MAE1, the Saccharomyces cerevisiae structural gene encoding mitochondrial malic enzyme.</title>
        <authorList>
            <person name="Boles E."/>
            <person name="de Jong-Gubbels P."/>
            <person name="Pronk J.T."/>
        </authorList>
    </citation>
    <scope>IDENTIFICATION</scope>
    <scope>SUBCELLULAR LOCATION</scope>
</reference>
<reference key="4">
    <citation type="journal article" date="2003" name="Nature">
        <title>Global analysis of protein expression in yeast.</title>
        <authorList>
            <person name="Ghaemmaghami S."/>
            <person name="Huh W.-K."/>
            <person name="Bower K."/>
            <person name="Howson R.W."/>
            <person name="Belle A."/>
            <person name="Dephoure N."/>
            <person name="O'Shea E.K."/>
            <person name="Weissman J.S."/>
        </authorList>
    </citation>
    <scope>LEVEL OF PROTEIN EXPRESSION [LARGE SCALE ANALYSIS]</scope>
</reference>
<reference key="5">
    <citation type="journal article" date="2003" name="Proc. Natl. Acad. Sci. U.S.A.">
        <title>The proteome of Saccharomyces cerevisiae mitochondria.</title>
        <authorList>
            <person name="Sickmann A."/>
            <person name="Reinders J."/>
            <person name="Wagner Y."/>
            <person name="Joppich C."/>
            <person name="Zahedi R.P."/>
            <person name="Meyer H.E."/>
            <person name="Schoenfisch B."/>
            <person name="Perschil I."/>
            <person name="Chacinska A."/>
            <person name="Guiard B."/>
            <person name="Rehling P."/>
            <person name="Pfanner N."/>
            <person name="Meisinger C."/>
        </authorList>
    </citation>
    <scope>SUBCELLULAR LOCATION [LARGE SCALE ANALYSIS]</scope>
    <source>
        <strain>ATCC 76625 / YPH499</strain>
    </source>
</reference>
<gene>
    <name type="primary">MAE1</name>
    <name type="ordered locus">YKL029C</name>
</gene>